<feature type="chain" id="PRO_0000119678" description="Glutamate--tRNA ligase">
    <location>
        <begin position="1"/>
        <end position="477"/>
    </location>
</feature>
<feature type="short sequence motif" description="'HIGH' region" evidence="1">
    <location>
        <begin position="8"/>
        <end position="18"/>
    </location>
</feature>
<feature type="short sequence motif" description="'KMSKS' region" evidence="1">
    <location>
        <begin position="247"/>
        <end position="251"/>
    </location>
</feature>
<feature type="binding site" evidence="1">
    <location>
        <position position="250"/>
    </location>
    <ligand>
        <name>ATP</name>
        <dbReference type="ChEBI" id="CHEBI:30616"/>
    </ligand>
</feature>
<reference key="1">
    <citation type="journal article" date="2003" name="Nature">
        <title>The genome of a motile marine Synechococcus.</title>
        <authorList>
            <person name="Palenik B."/>
            <person name="Brahamsha B."/>
            <person name="Larimer F.W."/>
            <person name="Land M.L."/>
            <person name="Hauser L."/>
            <person name="Chain P."/>
            <person name="Lamerdin J.E."/>
            <person name="Regala W."/>
            <person name="Allen E.E."/>
            <person name="McCarren J."/>
            <person name="Paulsen I.T."/>
            <person name="Dufresne A."/>
            <person name="Partensky F."/>
            <person name="Webb E.A."/>
            <person name="Waterbury J."/>
        </authorList>
    </citation>
    <scope>NUCLEOTIDE SEQUENCE [LARGE SCALE GENOMIC DNA]</scope>
    <source>
        <strain>WH8102</strain>
    </source>
</reference>
<organism>
    <name type="scientific">Parasynechococcus marenigrum (strain WH8102)</name>
    <dbReference type="NCBI Taxonomy" id="84588"/>
    <lineage>
        <taxon>Bacteria</taxon>
        <taxon>Bacillati</taxon>
        <taxon>Cyanobacteriota</taxon>
        <taxon>Cyanophyceae</taxon>
        <taxon>Synechococcales</taxon>
        <taxon>Prochlorococcaceae</taxon>
        <taxon>Parasynechococcus</taxon>
        <taxon>Parasynechococcus marenigrum</taxon>
    </lineage>
</organism>
<name>SYE_PARMW</name>
<proteinExistence type="inferred from homology"/>
<sequence length="477" mass="53329">MVRVRLAPSPTGTLHIGTARTAVFNWLYARRQQGSFLLRIEDTDKERSKPEYTQNILEGLRWLGIDWDEEPLIQSEQVQQHRAAIETLLQKGLAYRCYANEAELDAMREAQKASNQAPRYDNRHRNLTPEQEAAFQSEGREAVIRFRIDDNAEIRWNDMVRGAMSWRGADLGGDMVVARRAPADQIGDPLYNLVVVVDDAAMAISHVIRGEDHIANTAKQLLLYEALDLPAPTFAHAPLILNAEGRKLSKRDGVTSINDFRTMGYTAEAIANYMTLLGWSVPEGMEERFTLPEAAAVFSFDRVNKAGARFDWDKLNWLNGQVLHALPAQQLLDDLRPLWAEQGWTLPDDSSWGLELCELLGPSLTLLKEGVEQATPFFKCPDLEDDGVRQLEADGARTAVAQLLQILEAEPWDGKDTDRAKQLLADAAKGAGVKKGVVMKSLRAALLGRLQGPDLITTWCLLARIGEDLPRLQRCLA</sequence>
<gene>
    <name evidence="1" type="primary">gltX</name>
    <name type="ordered locus">SYNW1826</name>
</gene>
<dbReference type="EC" id="6.1.1.17" evidence="1"/>
<dbReference type="EMBL" id="BX569694">
    <property type="protein sequence ID" value="CAE08341.1"/>
    <property type="molecule type" value="Genomic_DNA"/>
</dbReference>
<dbReference type="RefSeq" id="WP_011128685.1">
    <property type="nucleotide sequence ID" value="NC_005070.1"/>
</dbReference>
<dbReference type="SMR" id="Q7U581"/>
<dbReference type="STRING" id="84588.SYNW1826"/>
<dbReference type="KEGG" id="syw:SYNW1826"/>
<dbReference type="eggNOG" id="COG0008">
    <property type="taxonomic scope" value="Bacteria"/>
</dbReference>
<dbReference type="HOGENOM" id="CLU_015768_6_0_3"/>
<dbReference type="Proteomes" id="UP000001422">
    <property type="component" value="Chromosome"/>
</dbReference>
<dbReference type="GO" id="GO:0005829">
    <property type="term" value="C:cytosol"/>
    <property type="evidence" value="ECO:0007669"/>
    <property type="project" value="TreeGrafter"/>
</dbReference>
<dbReference type="GO" id="GO:0005524">
    <property type="term" value="F:ATP binding"/>
    <property type="evidence" value="ECO:0007669"/>
    <property type="project" value="UniProtKB-UniRule"/>
</dbReference>
<dbReference type="GO" id="GO:0004818">
    <property type="term" value="F:glutamate-tRNA ligase activity"/>
    <property type="evidence" value="ECO:0007669"/>
    <property type="project" value="UniProtKB-UniRule"/>
</dbReference>
<dbReference type="GO" id="GO:0000049">
    <property type="term" value="F:tRNA binding"/>
    <property type="evidence" value="ECO:0007669"/>
    <property type="project" value="InterPro"/>
</dbReference>
<dbReference type="GO" id="GO:0008270">
    <property type="term" value="F:zinc ion binding"/>
    <property type="evidence" value="ECO:0007669"/>
    <property type="project" value="InterPro"/>
</dbReference>
<dbReference type="GO" id="GO:0006424">
    <property type="term" value="P:glutamyl-tRNA aminoacylation"/>
    <property type="evidence" value="ECO:0007669"/>
    <property type="project" value="UniProtKB-UniRule"/>
</dbReference>
<dbReference type="CDD" id="cd00808">
    <property type="entry name" value="GluRS_core"/>
    <property type="match status" value="1"/>
</dbReference>
<dbReference type="FunFam" id="3.40.50.620:FF:000007">
    <property type="entry name" value="Glutamate--tRNA ligase"/>
    <property type="match status" value="1"/>
</dbReference>
<dbReference type="Gene3D" id="1.10.10.350">
    <property type="match status" value="1"/>
</dbReference>
<dbReference type="Gene3D" id="1.10.8.70">
    <property type="entry name" value="Glutamate-tRNA synthetase, class I, anticodon-binding domain 1"/>
    <property type="match status" value="1"/>
</dbReference>
<dbReference type="Gene3D" id="1.10.1160.10">
    <property type="entry name" value="Glutamyl-trna Synthetase, Domain 2"/>
    <property type="match status" value="1"/>
</dbReference>
<dbReference type="Gene3D" id="3.90.800.10">
    <property type="entry name" value="Glutamyl-tRNA Synthetase, Domain 3"/>
    <property type="match status" value="1"/>
</dbReference>
<dbReference type="Gene3D" id="3.40.50.620">
    <property type="entry name" value="HUPs"/>
    <property type="match status" value="1"/>
</dbReference>
<dbReference type="HAMAP" id="MF_00022">
    <property type="entry name" value="Glu_tRNA_synth_type1"/>
    <property type="match status" value="1"/>
</dbReference>
<dbReference type="InterPro" id="IPR045462">
    <property type="entry name" value="aa-tRNA-synth_I_cd-bd"/>
</dbReference>
<dbReference type="InterPro" id="IPR020751">
    <property type="entry name" value="aa-tRNA-synth_I_codon-bd_sub2"/>
</dbReference>
<dbReference type="InterPro" id="IPR001412">
    <property type="entry name" value="aa-tRNA-synth_I_CS"/>
</dbReference>
<dbReference type="InterPro" id="IPR008925">
    <property type="entry name" value="aa_tRNA-synth_I_cd-bd_sf"/>
</dbReference>
<dbReference type="InterPro" id="IPR004527">
    <property type="entry name" value="Glu-tRNA-ligase_bac/mito"/>
</dbReference>
<dbReference type="InterPro" id="IPR020752">
    <property type="entry name" value="Glu-tRNA-synth_I_codon-bd_sub1"/>
</dbReference>
<dbReference type="InterPro" id="IPR000924">
    <property type="entry name" value="Glu/Gln-tRNA-synth"/>
</dbReference>
<dbReference type="InterPro" id="IPR020058">
    <property type="entry name" value="Glu/Gln-tRNA-synth_Ib_cat-dom"/>
</dbReference>
<dbReference type="InterPro" id="IPR020061">
    <property type="entry name" value="Glu_tRNA_lig_a-bdl"/>
</dbReference>
<dbReference type="InterPro" id="IPR049940">
    <property type="entry name" value="GluQ/Sye"/>
</dbReference>
<dbReference type="InterPro" id="IPR033910">
    <property type="entry name" value="GluRS_core"/>
</dbReference>
<dbReference type="InterPro" id="IPR014729">
    <property type="entry name" value="Rossmann-like_a/b/a_fold"/>
</dbReference>
<dbReference type="NCBIfam" id="TIGR00464">
    <property type="entry name" value="gltX_bact"/>
    <property type="match status" value="1"/>
</dbReference>
<dbReference type="NCBIfam" id="NF004315">
    <property type="entry name" value="PRK05710.1-4"/>
    <property type="match status" value="1"/>
</dbReference>
<dbReference type="PANTHER" id="PTHR43311">
    <property type="entry name" value="GLUTAMATE--TRNA LIGASE"/>
    <property type="match status" value="1"/>
</dbReference>
<dbReference type="PANTHER" id="PTHR43311:SF2">
    <property type="entry name" value="GLUTAMATE--TRNA LIGASE, MITOCHONDRIAL-RELATED"/>
    <property type="match status" value="1"/>
</dbReference>
<dbReference type="Pfam" id="PF19269">
    <property type="entry name" value="Anticodon_2"/>
    <property type="match status" value="1"/>
</dbReference>
<dbReference type="Pfam" id="PF00749">
    <property type="entry name" value="tRNA-synt_1c"/>
    <property type="match status" value="1"/>
</dbReference>
<dbReference type="PRINTS" id="PR00987">
    <property type="entry name" value="TRNASYNTHGLU"/>
</dbReference>
<dbReference type="SUPFAM" id="SSF48163">
    <property type="entry name" value="An anticodon-binding domain of class I aminoacyl-tRNA synthetases"/>
    <property type="match status" value="1"/>
</dbReference>
<dbReference type="SUPFAM" id="SSF52374">
    <property type="entry name" value="Nucleotidylyl transferase"/>
    <property type="match status" value="1"/>
</dbReference>
<dbReference type="PROSITE" id="PS00178">
    <property type="entry name" value="AA_TRNA_LIGASE_I"/>
    <property type="match status" value="1"/>
</dbReference>
<keyword id="KW-0030">Aminoacyl-tRNA synthetase</keyword>
<keyword id="KW-0067">ATP-binding</keyword>
<keyword id="KW-0963">Cytoplasm</keyword>
<keyword id="KW-0436">Ligase</keyword>
<keyword id="KW-0547">Nucleotide-binding</keyword>
<keyword id="KW-0648">Protein biosynthesis</keyword>
<comment type="function">
    <text evidence="1">Catalyzes the attachment of glutamate to tRNA(Glu) in a two-step reaction: glutamate is first activated by ATP to form Glu-AMP and then transferred to the acceptor end of tRNA(Glu).</text>
</comment>
<comment type="catalytic activity">
    <reaction evidence="1">
        <text>tRNA(Glu) + L-glutamate + ATP = L-glutamyl-tRNA(Glu) + AMP + diphosphate</text>
        <dbReference type="Rhea" id="RHEA:23540"/>
        <dbReference type="Rhea" id="RHEA-COMP:9663"/>
        <dbReference type="Rhea" id="RHEA-COMP:9680"/>
        <dbReference type="ChEBI" id="CHEBI:29985"/>
        <dbReference type="ChEBI" id="CHEBI:30616"/>
        <dbReference type="ChEBI" id="CHEBI:33019"/>
        <dbReference type="ChEBI" id="CHEBI:78442"/>
        <dbReference type="ChEBI" id="CHEBI:78520"/>
        <dbReference type="ChEBI" id="CHEBI:456215"/>
        <dbReference type="EC" id="6.1.1.17"/>
    </reaction>
</comment>
<comment type="subunit">
    <text evidence="1">Monomer.</text>
</comment>
<comment type="subcellular location">
    <subcellularLocation>
        <location evidence="1">Cytoplasm</location>
    </subcellularLocation>
</comment>
<comment type="similarity">
    <text evidence="1">Belongs to the class-I aminoacyl-tRNA synthetase family. Glutamate--tRNA ligase type 1 subfamily.</text>
</comment>
<evidence type="ECO:0000255" key="1">
    <source>
        <dbReference type="HAMAP-Rule" id="MF_00022"/>
    </source>
</evidence>
<protein>
    <recommendedName>
        <fullName evidence="1">Glutamate--tRNA ligase</fullName>
        <ecNumber evidence="1">6.1.1.17</ecNumber>
    </recommendedName>
    <alternativeName>
        <fullName evidence="1">Glutamyl-tRNA synthetase</fullName>
        <shortName evidence="1">GluRS</shortName>
    </alternativeName>
</protein>
<accession>Q7U581</accession>